<protein>
    <recommendedName>
        <fullName evidence="1">Large ribosomal subunit protein bL19</fullName>
    </recommendedName>
    <alternativeName>
        <fullName evidence="2">50S ribosomal protein L19</fullName>
    </alternativeName>
</protein>
<accession>C0QTZ1</accession>
<feature type="chain" id="PRO_1000193869" description="Large ribosomal subunit protein bL19">
    <location>
        <begin position="1"/>
        <end position="132"/>
    </location>
</feature>
<dbReference type="EMBL" id="CP001230">
    <property type="protein sequence ID" value="ACO04765.1"/>
    <property type="molecule type" value="Genomic_DNA"/>
</dbReference>
<dbReference type="RefSeq" id="WP_015898869.1">
    <property type="nucleotide sequence ID" value="NC_012440.1"/>
</dbReference>
<dbReference type="SMR" id="C0QTZ1"/>
<dbReference type="STRING" id="123214.PERMA_0364"/>
<dbReference type="PaxDb" id="123214-PERMA_0364"/>
<dbReference type="KEGG" id="pmx:PERMA_0364"/>
<dbReference type="eggNOG" id="COG0335">
    <property type="taxonomic scope" value="Bacteria"/>
</dbReference>
<dbReference type="HOGENOM" id="CLU_103507_2_2_0"/>
<dbReference type="OrthoDB" id="9803541at2"/>
<dbReference type="Proteomes" id="UP000001366">
    <property type="component" value="Chromosome"/>
</dbReference>
<dbReference type="GO" id="GO:0022625">
    <property type="term" value="C:cytosolic large ribosomal subunit"/>
    <property type="evidence" value="ECO:0007669"/>
    <property type="project" value="TreeGrafter"/>
</dbReference>
<dbReference type="GO" id="GO:0003735">
    <property type="term" value="F:structural constituent of ribosome"/>
    <property type="evidence" value="ECO:0007669"/>
    <property type="project" value="InterPro"/>
</dbReference>
<dbReference type="GO" id="GO:0006412">
    <property type="term" value="P:translation"/>
    <property type="evidence" value="ECO:0007669"/>
    <property type="project" value="UniProtKB-UniRule"/>
</dbReference>
<dbReference type="FunFam" id="2.30.30.790:FF:000001">
    <property type="entry name" value="50S ribosomal protein L19"/>
    <property type="match status" value="1"/>
</dbReference>
<dbReference type="Gene3D" id="2.30.30.790">
    <property type="match status" value="1"/>
</dbReference>
<dbReference type="HAMAP" id="MF_00402">
    <property type="entry name" value="Ribosomal_bL19"/>
    <property type="match status" value="1"/>
</dbReference>
<dbReference type="InterPro" id="IPR001857">
    <property type="entry name" value="Ribosomal_bL19"/>
</dbReference>
<dbReference type="InterPro" id="IPR018257">
    <property type="entry name" value="Ribosomal_bL19_CS"/>
</dbReference>
<dbReference type="InterPro" id="IPR038657">
    <property type="entry name" value="Ribosomal_bL19_sf"/>
</dbReference>
<dbReference type="InterPro" id="IPR008991">
    <property type="entry name" value="Translation_prot_SH3-like_sf"/>
</dbReference>
<dbReference type="NCBIfam" id="TIGR01024">
    <property type="entry name" value="rplS_bact"/>
    <property type="match status" value="1"/>
</dbReference>
<dbReference type="PANTHER" id="PTHR15680:SF9">
    <property type="entry name" value="LARGE RIBOSOMAL SUBUNIT PROTEIN BL19M"/>
    <property type="match status" value="1"/>
</dbReference>
<dbReference type="PANTHER" id="PTHR15680">
    <property type="entry name" value="RIBOSOMAL PROTEIN L19"/>
    <property type="match status" value="1"/>
</dbReference>
<dbReference type="Pfam" id="PF01245">
    <property type="entry name" value="Ribosomal_L19"/>
    <property type="match status" value="1"/>
</dbReference>
<dbReference type="PIRSF" id="PIRSF002191">
    <property type="entry name" value="Ribosomal_L19"/>
    <property type="match status" value="1"/>
</dbReference>
<dbReference type="PRINTS" id="PR00061">
    <property type="entry name" value="RIBOSOMALL19"/>
</dbReference>
<dbReference type="SUPFAM" id="SSF50104">
    <property type="entry name" value="Translation proteins SH3-like domain"/>
    <property type="match status" value="1"/>
</dbReference>
<dbReference type="PROSITE" id="PS01015">
    <property type="entry name" value="RIBOSOMAL_L19"/>
    <property type="match status" value="1"/>
</dbReference>
<organism>
    <name type="scientific">Persephonella marina (strain DSM 14350 / EX-H1)</name>
    <dbReference type="NCBI Taxonomy" id="123214"/>
    <lineage>
        <taxon>Bacteria</taxon>
        <taxon>Pseudomonadati</taxon>
        <taxon>Aquificota</taxon>
        <taxon>Aquificia</taxon>
        <taxon>Aquificales</taxon>
        <taxon>Hydrogenothermaceae</taxon>
        <taxon>Persephonella</taxon>
    </lineage>
</organism>
<gene>
    <name evidence="1" type="primary">rplS</name>
    <name type="ordered locus">PERMA_0364</name>
</gene>
<reference key="1">
    <citation type="journal article" date="2009" name="J. Bacteriol.">
        <title>Complete and draft genome sequences of six members of the Aquificales.</title>
        <authorList>
            <person name="Reysenbach A.-L."/>
            <person name="Hamamura N."/>
            <person name="Podar M."/>
            <person name="Griffiths E."/>
            <person name="Ferreira S."/>
            <person name="Hochstein R."/>
            <person name="Heidelberg J."/>
            <person name="Johnson J."/>
            <person name="Mead D."/>
            <person name="Pohorille A."/>
            <person name="Sarmiento M."/>
            <person name="Schweighofer K."/>
            <person name="Seshadri R."/>
            <person name="Voytek M.A."/>
        </authorList>
    </citation>
    <scope>NUCLEOTIDE SEQUENCE [LARGE SCALE GENOMIC DNA]</scope>
    <source>
        <strain>DSM 14350 / EX-H1</strain>
    </source>
</reference>
<evidence type="ECO:0000255" key="1">
    <source>
        <dbReference type="HAMAP-Rule" id="MF_00402"/>
    </source>
</evidence>
<evidence type="ECO:0000305" key="2"/>
<comment type="function">
    <text evidence="1">This protein is located at the 30S-50S ribosomal subunit interface and may play a role in the structure and function of the aminoacyl-tRNA binding site.</text>
</comment>
<comment type="similarity">
    <text evidence="1">Belongs to the bacterial ribosomal protein bL19 family.</text>
</comment>
<sequence length="132" mass="15510">MNALIREIEQAYMPKNFPEFRVGDTVRVHVKVKERNKERIQVFEGVVIRIKGSGTGKTFTVRKESYGVGIERIFPFACPSIDKVEVTKRGKVRRAKLYYLRERRGKAARIREIKEWEIRKRAEESKAAKENQ</sequence>
<keyword id="KW-1185">Reference proteome</keyword>
<keyword id="KW-0687">Ribonucleoprotein</keyword>
<keyword id="KW-0689">Ribosomal protein</keyword>
<proteinExistence type="inferred from homology"/>
<name>RL19_PERMH</name>